<proteinExistence type="inferred from homology"/>
<reference key="1">
    <citation type="journal article" date="2006" name="J. Bacteriol.">
        <title>Whole-genome comparison between Photorhabdus strains to identify genomic regions involved in the specificity of nematode interaction.</title>
        <authorList>
            <person name="Gaudriault S."/>
            <person name="Duchaud E."/>
            <person name="Lanois A."/>
            <person name="Canoy A.-S."/>
            <person name="Bourot S."/>
            <person name="DeRose R."/>
            <person name="Kunst F."/>
            <person name="Boemare N."/>
            <person name="Givaudan A."/>
        </authorList>
    </citation>
    <scope>NUCLEOTIDE SEQUENCE [GENOMIC DNA]</scope>
    <source>
        <strain>C1 / NC19</strain>
    </source>
</reference>
<gene>
    <name type="primary">lsrB</name>
</gene>
<evidence type="ECO:0000250" key="1"/>
<evidence type="ECO:0000255" key="2"/>
<evidence type="ECO:0000305" key="3"/>
<dbReference type="EMBL" id="AJ967009">
    <property type="protein sequence ID" value="CAI91188.1"/>
    <property type="molecule type" value="Genomic_DNA"/>
</dbReference>
<dbReference type="GO" id="GO:0043190">
    <property type="term" value="C:ATP-binding cassette (ABC) transporter complex"/>
    <property type="evidence" value="ECO:0007669"/>
    <property type="project" value="InterPro"/>
</dbReference>
<dbReference type="GO" id="GO:0030288">
    <property type="term" value="C:outer membrane-bounded periplasmic space"/>
    <property type="evidence" value="ECO:0007669"/>
    <property type="project" value="TreeGrafter"/>
</dbReference>
<dbReference type="GO" id="GO:0030246">
    <property type="term" value="F:carbohydrate binding"/>
    <property type="evidence" value="ECO:0007669"/>
    <property type="project" value="TreeGrafter"/>
</dbReference>
<dbReference type="CDD" id="cd20003">
    <property type="entry name" value="PBP1_LsrB_Quorum_Sensing"/>
    <property type="match status" value="1"/>
</dbReference>
<dbReference type="Gene3D" id="3.40.50.2300">
    <property type="match status" value="2"/>
</dbReference>
<dbReference type="InterPro" id="IPR050555">
    <property type="entry name" value="Bact_Solute-Bind_Prot2"/>
</dbReference>
<dbReference type="InterPro" id="IPR030159">
    <property type="entry name" value="LsrB"/>
</dbReference>
<dbReference type="InterPro" id="IPR028082">
    <property type="entry name" value="Peripla_BP_I"/>
</dbReference>
<dbReference type="InterPro" id="IPR025997">
    <property type="entry name" value="SBP_2_dom"/>
</dbReference>
<dbReference type="NCBIfam" id="NF011937">
    <property type="entry name" value="PRK15408.1"/>
    <property type="match status" value="1"/>
</dbReference>
<dbReference type="PANTHER" id="PTHR30036:SF7">
    <property type="entry name" value="ABC TRANSPORTER PERIPLASMIC-BINDING PROTEIN YPHF"/>
    <property type="match status" value="1"/>
</dbReference>
<dbReference type="PANTHER" id="PTHR30036">
    <property type="entry name" value="D-XYLOSE-BINDING PERIPLASMIC PROTEIN"/>
    <property type="match status" value="1"/>
</dbReference>
<dbReference type="Pfam" id="PF13407">
    <property type="entry name" value="Peripla_BP_4"/>
    <property type="match status" value="1"/>
</dbReference>
<dbReference type="SUPFAM" id="SSF53822">
    <property type="entry name" value="Periplasmic binding protein-like I"/>
    <property type="match status" value="1"/>
</dbReference>
<sequence>MKAPILKKLALISVLSLACTSWVHAAERIAFIPKLVGVGFFTSGGQGAVAAGKTLGVSVTYDGPTEPSVAGQVQLINNFVNQGYDAIVVSAVSPEGLCPALKRAMKRGVKILTWDSDTSPECRSIYINQGTPNQLGGMLVDMTANQVKKEQAKVAFFYSSPTVTDQNQWVXQAKDKIAAEHPGWEIVTTQFGYNDATKSLQTAEGILNAWSDLDAIIAPDANALPAAAQAAENLKRQDVAIVGFSTPNVMRPYLERGTVKQFGLWDVVSQGKISIHVANELLRKGDLNVGDKLDIPDIGTVAVAPNSIQGYSYEAKGNGIVVLPERVIFTKDNINQYDF</sequence>
<protein>
    <recommendedName>
        <fullName>Autoinducer 2-binding protein LsrB</fullName>
        <shortName>AI-2-binding protein LsrB</shortName>
    </recommendedName>
</protein>
<keyword id="KW-0574">Periplasm</keyword>
<keyword id="KW-0732">Signal</keyword>
<name>LSRB_PHOTE</name>
<feature type="signal peptide" evidence="2">
    <location>
        <begin position="1"/>
        <end position="25"/>
    </location>
</feature>
<feature type="chain" id="PRO_0000351325" description="Autoinducer 2-binding protein LsrB">
    <location>
        <begin position="26"/>
        <end position="339"/>
    </location>
</feature>
<organism>
    <name type="scientific">Photorhabdus temperata</name>
    <dbReference type="NCBI Taxonomy" id="574560"/>
    <lineage>
        <taxon>Bacteria</taxon>
        <taxon>Pseudomonadati</taxon>
        <taxon>Pseudomonadota</taxon>
        <taxon>Gammaproteobacteria</taxon>
        <taxon>Enterobacterales</taxon>
        <taxon>Morganellaceae</taxon>
        <taxon>Photorhabdus</taxon>
    </lineage>
</organism>
<comment type="function">
    <text evidence="1">Part of the ABC transporter complex LsrABCD involved in autoinducer 2 (AI-2) import. Binds AI-2 and delivers it to the LsrC and LsrD permeases (By similarity).</text>
</comment>
<comment type="subunit">
    <text evidence="1">The complex is composed of two ATP-binding proteins (LsrA), two transmembrane proteins (LsrC and LsrD) and a solute-binding protein (LsrB).</text>
</comment>
<comment type="subcellular location">
    <subcellularLocation>
        <location evidence="3">Periplasm</location>
    </subcellularLocation>
</comment>
<comment type="similarity">
    <text evidence="3">Belongs to the bacterial solute-binding protein 2 family.</text>
</comment>
<accession>Q2PBM5</accession>